<organism>
    <name type="scientific">Drosophila melanogaster</name>
    <name type="common">Fruit fly</name>
    <dbReference type="NCBI Taxonomy" id="7227"/>
    <lineage>
        <taxon>Eukaryota</taxon>
        <taxon>Metazoa</taxon>
        <taxon>Ecdysozoa</taxon>
        <taxon>Arthropoda</taxon>
        <taxon>Hexapoda</taxon>
        <taxon>Insecta</taxon>
        <taxon>Pterygota</taxon>
        <taxon>Neoptera</taxon>
        <taxon>Endopterygota</taxon>
        <taxon>Diptera</taxon>
        <taxon>Brachycera</taxon>
        <taxon>Muscomorpha</taxon>
        <taxon>Ephydroidea</taxon>
        <taxon>Drosophilidae</taxon>
        <taxon>Drosophila</taxon>
        <taxon>Sophophora</taxon>
    </lineage>
</organism>
<reference key="1">
    <citation type="journal article" date="2000" name="Science">
        <title>The genome sequence of Drosophila melanogaster.</title>
        <authorList>
            <person name="Adams M.D."/>
            <person name="Celniker S.E."/>
            <person name="Holt R.A."/>
            <person name="Evans C.A."/>
            <person name="Gocayne J.D."/>
            <person name="Amanatides P.G."/>
            <person name="Scherer S.E."/>
            <person name="Li P.W."/>
            <person name="Hoskins R.A."/>
            <person name="Galle R.F."/>
            <person name="George R.A."/>
            <person name="Lewis S.E."/>
            <person name="Richards S."/>
            <person name="Ashburner M."/>
            <person name="Henderson S.N."/>
            <person name="Sutton G.G."/>
            <person name="Wortman J.R."/>
            <person name="Yandell M.D."/>
            <person name="Zhang Q."/>
            <person name="Chen L.X."/>
            <person name="Brandon R.C."/>
            <person name="Rogers Y.-H.C."/>
            <person name="Blazej R.G."/>
            <person name="Champe M."/>
            <person name="Pfeiffer B.D."/>
            <person name="Wan K.H."/>
            <person name="Doyle C."/>
            <person name="Baxter E.G."/>
            <person name="Helt G."/>
            <person name="Nelson C.R."/>
            <person name="Miklos G.L.G."/>
            <person name="Abril J.F."/>
            <person name="Agbayani A."/>
            <person name="An H.-J."/>
            <person name="Andrews-Pfannkoch C."/>
            <person name="Baldwin D."/>
            <person name="Ballew R.M."/>
            <person name="Basu A."/>
            <person name="Baxendale J."/>
            <person name="Bayraktaroglu L."/>
            <person name="Beasley E.M."/>
            <person name="Beeson K.Y."/>
            <person name="Benos P.V."/>
            <person name="Berman B.P."/>
            <person name="Bhandari D."/>
            <person name="Bolshakov S."/>
            <person name="Borkova D."/>
            <person name="Botchan M.R."/>
            <person name="Bouck J."/>
            <person name="Brokstein P."/>
            <person name="Brottier P."/>
            <person name="Burtis K.C."/>
            <person name="Busam D.A."/>
            <person name="Butler H."/>
            <person name="Cadieu E."/>
            <person name="Center A."/>
            <person name="Chandra I."/>
            <person name="Cherry J.M."/>
            <person name="Cawley S."/>
            <person name="Dahlke C."/>
            <person name="Davenport L.B."/>
            <person name="Davies P."/>
            <person name="de Pablos B."/>
            <person name="Delcher A."/>
            <person name="Deng Z."/>
            <person name="Mays A.D."/>
            <person name="Dew I."/>
            <person name="Dietz S.M."/>
            <person name="Dodson K."/>
            <person name="Doup L.E."/>
            <person name="Downes M."/>
            <person name="Dugan-Rocha S."/>
            <person name="Dunkov B.C."/>
            <person name="Dunn P."/>
            <person name="Durbin K.J."/>
            <person name="Evangelista C.C."/>
            <person name="Ferraz C."/>
            <person name="Ferriera S."/>
            <person name="Fleischmann W."/>
            <person name="Fosler C."/>
            <person name="Gabrielian A.E."/>
            <person name="Garg N.S."/>
            <person name="Gelbart W.M."/>
            <person name="Glasser K."/>
            <person name="Glodek A."/>
            <person name="Gong F."/>
            <person name="Gorrell J.H."/>
            <person name="Gu Z."/>
            <person name="Guan P."/>
            <person name="Harris M."/>
            <person name="Harris N.L."/>
            <person name="Harvey D.A."/>
            <person name="Heiman T.J."/>
            <person name="Hernandez J.R."/>
            <person name="Houck J."/>
            <person name="Hostin D."/>
            <person name="Houston K.A."/>
            <person name="Howland T.J."/>
            <person name="Wei M.-H."/>
            <person name="Ibegwam C."/>
            <person name="Jalali M."/>
            <person name="Kalush F."/>
            <person name="Karpen G.H."/>
            <person name="Ke Z."/>
            <person name="Kennison J.A."/>
            <person name="Ketchum K.A."/>
            <person name="Kimmel B.E."/>
            <person name="Kodira C.D."/>
            <person name="Kraft C.L."/>
            <person name="Kravitz S."/>
            <person name="Kulp D."/>
            <person name="Lai Z."/>
            <person name="Lasko P."/>
            <person name="Lei Y."/>
            <person name="Levitsky A.A."/>
            <person name="Li J.H."/>
            <person name="Li Z."/>
            <person name="Liang Y."/>
            <person name="Lin X."/>
            <person name="Liu X."/>
            <person name="Mattei B."/>
            <person name="McIntosh T.C."/>
            <person name="McLeod M.P."/>
            <person name="McPherson D."/>
            <person name="Merkulov G."/>
            <person name="Milshina N.V."/>
            <person name="Mobarry C."/>
            <person name="Morris J."/>
            <person name="Moshrefi A."/>
            <person name="Mount S.M."/>
            <person name="Moy M."/>
            <person name="Murphy B."/>
            <person name="Murphy L."/>
            <person name="Muzny D.M."/>
            <person name="Nelson D.L."/>
            <person name="Nelson D.R."/>
            <person name="Nelson K.A."/>
            <person name="Nixon K."/>
            <person name="Nusskern D.R."/>
            <person name="Pacleb J.M."/>
            <person name="Palazzolo M."/>
            <person name="Pittman G.S."/>
            <person name="Pan S."/>
            <person name="Pollard J."/>
            <person name="Puri V."/>
            <person name="Reese M.G."/>
            <person name="Reinert K."/>
            <person name="Remington K."/>
            <person name="Saunders R.D.C."/>
            <person name="Scheeler F."/>
            <person name="Shen H."/>
            <person name="Shue B.C."/>
            <person name="Siden-Kiamos I."/>
            <person name="Simpson M."/>
            <person name="Skupski M.P."/>
            <person name="Smith T.J."/>
            <person name="Spier E."/>
            <person name="Spradling A.C."/>
            <person name="Stapleton M."/>
            <person name="Strong R."/>
            <person name="Sun E."/>
            <person name="Svirskas R."/>
            <person name="Tector C."/>
            <person name="Turner R."/>
            <person name="Venter E."/>
            <person name="Wang A.H."/>
            <person name="Wang X."/>
            <person name="Wang Z.-Y."/>
            <person name="Wassarman D.A."/>
            <person name="Weinstock G.M."/>
            <person name="Weissenbach J."/>
            <person name="Williams S.M."/>
            <person name="Woodage T."/>
            <person name="Worley K.C."/>
            <person name="Wu D."/>
            <person name="Yang S."/>
            <person name="Yao Q.A."/>
            <person name="Ye J."/>
            <person name="Yeh R.-F."/>
            <person name="Zaveri J.S."/>
            <person name="Zhan M."/>
            <person name="Zhang G."/>
            <person name="Zhao Q."/>
            <person name="Zheng L."/>
            <person name="Zheng X.H."/>
            <person name="Zhong F.N."/>
            <person name="Zhong W."/>
            <person name="Zhou X."/>
            <person name="Zhu S.C."/>
            <person name="Zhu X."/>
            <person name="Smith H.O."/>
            <person name="Gibbs R.A."/>
            <person name="Myers E.W."/>
            <person name="Rubin G.M."/>
            <person name="Venter J.C."/>
        </authorList>
    </citation>
    <scope>NUCLEOTIDE SEQUENCE [LARGE SCALE GENOMIC DNA]</scope>
    <source>
        <strain>Berkeley</strain>
    </source>
</reference>
<reference key="2">
    <citation type="journal article" date="2002" name="Genome Biol.">
        <title>Annotation of the Drosophila melanogaster euchromatic genome: a systematic review.</title>
        <authorList>
            <person name="Misra S."/>
            <person name="Crosby M.A."/>
            <person name="Mungall C.J."/>
            <person name="Matthews B.B."/>
            <person name="Campbell K.S."/>
            <person name="Hradecky P."/>
            <person name="Huang Y."/>
            <person name="Kaminker J.S."/>
            <person name="Millburn G.H."/>
            <person name="Prochnik S.E."/>
            <person name="Smith C.D."/>
            <person name="Tupy J.L."/>
            <person name="Whitfield E.J."/>
            <person name="Bayraktaroglu L."/>
            <person name="Berman B.P."/>
            <person name="Bettencourt B.R."/>
            <person name="Celniker S.E."/>
            <person name="de Grey A.D.N.J."/>
            <person name="Drysdale R.A."/>
            <person name="Harris N.L."/>
            <person name="Richter J."/>
            <person name="Russo S."/>
            <person name="Schroeder A.J."/>
            <person name="Shu S.Q."/>
            <person name="Stapleton M."/>
            <person name="Yamada C."/>
            <person name="Ashburner M."/>
            <person name="Gelbart W.M."/>
            <person name="Rubin G.M."/>
            <person name="Lewis S.E."/>
        </authorList>
    </citation>
    <scope>GENOME REANNOTATION</scope>
    <source>
        <strain>Berkeley</strain>
    </source>
</reference>
<reference key="3">
    <citation type="journal article" date="2002" name="Genome Biol.">
        <title>A Drosophila full-length cDNA resource.</title>
        <authorList>
            <person name="Stapleton M."/>
            <person name="Carlson J.W."/>
            <person name="Brokstein P."/>
            <person name="Yu C."/>
            <person name="Champe M."/>
            <person name="George R.A."/>
            <person name="Guarin H."/>
            <person name="Kronmiller B."/>
            <person name="Pacleb J.M."/>
            <person name="Park S."/>
            <person name="Wan K.H."/>
            <person name="Rubin G.M."/>
            <person name="Celniker S.E."/>
        </authorList>
    </citation>
    <scope>NUCLEOTIDE SEQUENCE [LARGE SCALE MRNA]</scope>
    <source>
        <strain>Berkeley</strain>
        <tissue>Embryo</tissue>
    </source>
</reference>
<reference key="4">
    <citation type="journal article" date="2008" name="J. Proteome Res.">
        <title>Phosphoproteome analysis of Drosophila melanogaster embryos.</title>
        <authorList>
            <person name="Zhai B."/>
            <person name="Villen J."/>
            <person name="Beausoleil S.A."/>
            <person name="Mintseris J."/>
            <person name="Gygi S.P."/>
        </authorList>
    </citation>
    <scope>PHOSPHORYLATION [LARGE SCALE ANALYSIS] AT TYR-102</scope>
    <scope>IDENTIFICATION BY MASS SPECTROMETRY</scope>
    <source>
        <tissue>Embryo</tissue>
    </source>
</reference>
<reference key="5">
    <citation type="journal article" date="2013" name="Nature">
        <title>Structures of the human and Drosophila 80S ribosome.</title>
        <authorList>
            <person name="Anger A.M."/>
            <person name="Armache J.P."/>
            <person name="Berninghausen O."/>
            <person name="Habeck M."/>
            <person name="Subklewe M."/>
            <person name="Wilson D.N."/>
            <person name="Beckmann R."/>
        </authorList>
    </citation>
    <scope>STRUCTURE BY ELECTRON MICROSCOPY (6.0 ANGSTROMS) OF THE 80S RIBOSOME</scope>
</reference>
<gene>
    <name type="primary">RpL31</name>
    <name type="ORF">CG1821</name>
</gene>
<sequence length="124" mass="14533">MTKTKGEKINKSAINEVVTRECTIHLAKRVHNIGFKKRAPRAIKEIRKFAEREMGTTDVRIDTRLNKHIWSKGIRSTPFRIRVRLARRRNDDEDSPNKLYTYVTYVPVSTFKNLQTENVESSDD</sequence>
<protein>
    <recommendedName>
        <fullName evidence="2">Large ribosomal subunit protein eL31</fullName>
    </recommendedName>
    <alternativeName>
        <fullName>60S ribosomal protein L31</fullName>
    </alternativeName>
</protein>
<feature type="chain" id="PRO_0000153771" description="Large ribosomal subunit protein eL31">
    <location>
        <begin position="1"/>
        <end position="124"/>
    </location>
</feature>
<feature type="modified residue" description="Phosphotyrosine" evidence="1">
    <location>
        <position position="102"/>
    </location>
</feature>
<accession>Q9V597</accession>
<accession>A4UZ96</accession>
<accession>Q0E9E4</accession>
<keyword id="KW-0002">3D-structure</keyword>
<keyword id="KW-0597">Phosphoprotein</keyword>
<keyword id="KW-1185">Reference proteome</keyword>
<keyword id="KW-0687">Ribonucleoprotein</keyword>
<keyword id="KW-0689">Ribosomal protein</keyword>
<comment type="similarity">
    <text evidence="2">Belongs to the eukaryotic ribosomal protein eL31 family.</text>
</comment>
<name>RL31_DROME</name>
<evidence type="ECO:0000269" key="1">
    <source>
    </source>
</evidence>
<evidence type="ECO:0000305" key="2"/>
<proteinExistence type="evidence at protein level"/>
<dbReference type="EMBL" id="AE013599">
    <property type="protein sequence ID" value="AAM71073.1"/>
    <property type="molecule type" value="Genomic_DNA"/>
</dbReference>
<dbReference type="EMBL" id="AE013599">
    <property type="protein sequence ID" value="AAM71074.1"/>
    <property type="molecule type" value="Genomic_DNA"/>
</dbReference>
<dbReference type="EMBL" id="AY113508">
    <property type="protein sequence ID" value="AAM29513.1"/>
    <property type="molecule type" value="mRNA"/>
</dbReference>
<dbReference type="RefSeq" id="NP_610503.1">
    <property type="nucleotide sequence ID" value="NM_136659.3"/>
</dbReference>
<dbReference type="RefSeq" id="NP_724804.1">
    <property type="nucleotide sequence ID" value="NM_165682.2"/>
</dbReference>
<dbReference type="RefSeq" id="NP_724805.1">
    <property type="nucleotide sequence ID" value="NM_165683.2"/>
</dbReference>
<dbReference type="PDB" id="4V6W">
    <property type="method" value="EM"/>
    <property type="resolution" value="6.00 A"/>
    <property type="chains" value="Cd=1-124"/>
</dbReference>
<dbReference type="PDB" id="6XU6">
    <property type="method" value="EM"/>
    <property type="resolution" value="3.50 A"/>
    <property type="chains" value="Cd=15-122"/>
</dbReference>
<dbReference type="PDB" id="6XU7">
    <property type="method" value="EM"/>
    <property type="resolution" value="4.90 A"/>
    <property type="chains" value="Cd=14-124"/>
</dbReference>
<dbReference type="PDB" id="6XU8">
    <property type="method" value="EM"/>
    <property type="resolution" value="3.00 A"/>
    <property type="chains" value="Cd=15-121"/>
</dbReference>
<dbReference type="PDBsum" id="4V6W"/>
<dbReference type="PDBsum" id="6XU6"/>
<dbReference type="PDBsum" id="6XU7"/>
<dbReference type="PDBsum" id="6XU8"/>
<dbReference type="EMDB" id="EMD-10622"/>
<dbReference type="EMDB" id="EMD-10623"/>
<dbReference type="EMDB" id="EMD-10624"/>
<dbReference type="SMR" id="Q9V597"/>
<dbReference type="BioGRID" id="61819">
    <property type="interactions" value="117"/>
</dbReference>
<dbReference type="DIP" id="DIP-18938N"/>
<dbReference type="FunCoup" id="Q9V597">
    <property type="interactions" value="1321"/>
</dbReference>
<dbReference type="IntAct" id="Q9V597">
    <property type="interactions" value="20"/>
</dbReference>
<dbReference type="STRING" id="7227.FBpp0087610"/>
<dbReference type="iPTMnet" id="Q9V597"/>
<dbReference type="PaxDb" id="7227-FBpp0087608"/>
<dbReference type="DNASU" id="35988"/>
<dbReference type="EnsemblMetazoa" id="FBtr0088525">
    <property type="protein sequence ID" value="FBpp0087608"/>
    <property type="gene ID" value="FBgn0285949"/>
</dbReference>
<dbReference type="EnsemblMetazoa" id="FBtr0088526">
    <property type="protein sequence ID" value="FBpp0087609"/>
    <property type="gene ID" value="FBgn0285949"/>
</dbReference>
<dbReference type="EnsemblMetazoa" id="FBtr0088527">
    <property type="protein sequence ID" value="FBpp0087610"/>
    <property type="gene ID" value="FBgn0285949"/>
</dbReference>
<dbReference type="GeneID" id="35988"/>
<dbReference type="KEGG" id="dme:Dmel_CG1821"/>
<dbReference type="AGR" id="FB:FBgn0285949"/>
<dbReference type="CTD" id="6160"/>
<dbReference type="FlyBase" id="FBgn0285949">
    <property type="gene designation" value="RpL31"/>
</dbReference>
<dbReference type="VEuPathDB" id="VectorBase:FBgn0285949"/>
<dbReference type="eggNOG" id="KOG0893">
    <property type="taxonomic scope" value="Eukaryota"/>
</dbReference>
<dbReference type="GeneTree" id="ENSGT00950000183030"/>
<dbReference type="HOGENOM" id="CLU_112570_1_1_1"/>
<dbReference type="InParanoid" id="Q9V597"/>
<dbReference type="OMA" id="EVWKQGI"/>
<dbReference type="OrthoDB" id="9739313at2759"/>
<dbReference type="PhylomeDB" id="Q9V597"/>
<dbReference type="Reactome" id="R-DME-156827">
    <property type="pathway name" value="L13a-mediated translational silencing of Ceruloplasmin expression"/>
</dbReference>
<dbReference type="Reactome" id="R-DME-1799339">
    <property type="pathway name" value="SRP-dependent cotranslational protein targeting to membrane"/>
</dbReference>
<dbReference type="Reactome" id="R-DME-72689">
    <property type="pathway name" value="Formation of a pool of free 40S subunits"/>
</dbReference>
<dbReference type="Reactome" id="R-DME-72706">
    <property type="pathway name" value="GTP hydrolysis and joining of the 60S ribosomal subunit"/>
</dbReference>
<dbReference type="Reactome" id="R-DME-975956">
    <property type="pathway name" value="Nonsense Mediated Decay (NMD) independent of the Exon Junction Complex (EJC)"/>
</dbReference>
<dbReference type="Reactome" id="R-DME-975957">
    <property type="pathway name" value="Nonsense Mediated Decay (NMD) enhanced by the Exon Junction Complex (EJC)"/>
</dbReference>
<dbReference type="SignaLink" id="Q9V597"/>
<dbReference type="BioGRID-ORCS" id="35988">
    <property type="hits" value="1 hit in 1 CRISPR screen"/>
</dbReference>
<dbReference type="ChiTaRS" id="RpL31">
    <property type="organism name" value="fly"/>
</dbReference>
<dbReference type="GenomeRNAi" id="35988"/>
<dbReference type="PRO" id="PR:Q9V597"/>
<dbReference type="Proteomes" id="UP000000803">
    <property type="component" value="Chromosome 2R"/>
</dbReference>
<dbReference type="Bgee" id="FBgn0285949">
    <property type="expression patterns" value="Expressed in wing disc and 293 other cell types or tissues"/>
</dbReference>
<dbReference type="GO" id="GO:0022625">
    <property type="term" value="C:cytosolic large ribosomal subunit"/>
    <property type="evidence" value="ECO:0000318"/>
    <property type="project" value="GO_Central"/>
</dbReference>
<dbReference type="GO" id="GO:0022626">
    <property type="term" value="C:cytosolic ribosome"/>
    <property type="evidence" value="ECO:0000314"/>
    <property type="project" value="FlyBase"/>
</dbReference>
<dbReference type="GO" id="GO:0003735">
    <property type="term" value="F:structural constituent of ribosome"/>
    <property type="evidence" value="ECO:0000314"/>
    <property type="project" value="FlyBase"/>
</dbReference>
<dbReference type="GO" id="GO:0002181">
    <property type="term" value="P:cytoplasmic translation"/>
    <property type="evidence" value="ECO:0000318"/>
    <property type="project" value="GO_Central"/>
</dbReference>
<dbReference type="CDD" id="cd00463">
    <property type="entry name" value="Ribosomal_L31e"/>
    <property type="match status" value="1"/>
</dbReference>
<dbReference type="FunFam" id="3.10.440.10:FF:000001">
    <property type="entry name" value="60S ribosomal protein L31"/>
    <property type="match status" value="1"/>
</dbReference>
<dbReference type="Gene3D" id="3.10.440.10">
    <property type="match status" value="1"/>
</dbReference>
<dbReference type="InterPro" id="IPR000054">
    <property type="entry name" value="Ribosomal_eL31"/>
</dbReference>
<dbReference type="InterPro" id="IPR020052">
    <property type="entry name" value="Ribosomal_eL31_CS"/>
</dbReference>
<dbReference type="InterPro" id="IPR023621">
    <property type="entry name" value="Ribosomal_eL31_dom_sf"/>
</dbReference>
<dbReference type="PANTHER" id="PTHR10956">
    <property type="entry name" value="60S RIBOSOMAL PROTEIN L31"/>
    <property type="match status" value="1"/>
</dbReference>
<dbReference type="PANTHER" id="PTHR10956:SF0">
    <property type="entry name" value="60S RIBOSOMAL PROTEIN L31"/>
    <property type="match status" value="1"/>
</dbReference>
<dbReference type="Pfam" id="PF01198">
    <property type="entry name" value="Ribosomal_L31e"/>
    <property type="match status" value="1"/>
</dbReference>
<dbReference type="SMART" id="SM01380">
    <property type="entry name" value="Ribosomal_L31e"/>
    <property type="match status" value="1"/>
</dbReference>
<dbReference type="SUPFAM" id="SSF54575">
    <property type="entry name" value="Ribosomal protein L31e"/>
    <property type="match status" value="1"/>
</dbReference>
<dbReference type="PROSITE" id="PS01144">
    <property type="entry name" value="RIBOSOMAL_L31E"/>
    <property type="match status" value="1"/>
</dbReference>